<keyword id="KW-0028">Amino-acid biosynthesis</keyword>
<keyword id="KW-0963">Cytoplasm</keyword>
<keyword id="KW-0368">Histidine biosynthesis</keyword>
<keyword id="KW-0413">Isomerase</keyword>
<feature type="chain" id="PRO_1000063190" description="1-(5-phosphoribosyl)-5-[(5-phosphoribosylamino)methylideneamino] imidazole-4-carboxamide isomerase">
    <location>
        <begin position="1"/>
        <end position="251"/>
    </location>
</feature>
<feature type="active site" description="Proton acceptor" evidence="1">
    <location>
        <position position="8"/>
    </location>
</feature>
<feature type="active site" description="Proton donor" evidence="1">
    <location>
        <position position="131"/>
    </location>
</feature>
<evidence type="ECO:0000255" key="1">
    <source>
        <dbReference type="HAMAP-Rule" id="MF_01014"/>
    </source>
</evidence>
<comment type="catalytic activity">
    <reaction evidence="1">
        <text>1-(5-phospho-beta-D-ribosyl)-5-[(5-phospho-beta-D-ribosylamino)methylideneamino]imidazole-4-carboxamide = 5-[(5-phospho-1-deoxy-D-ribulos-1-ylimino)methylamino]-1-(5-phospho-beta-D-ribosyl)imidazole-4-carboxamide</text>
        <dbReference type="Rhea" id="RHEA:15469"/>
        <dbReference type="ChEBI" id="CHEBI:58435"/>
        <dbReference type="ChEBI" id="CHEBI:58525"/>
        <dbReference type="EC" id="5.3.1.16"/>
    </reaction>
</comment>
<comment type="pathway">
    <text evidence="1">Amino-acid biosynthesis; L-histidine biosynthesis; L-histidine from 5-phospho-alpha-D-ribose 1-diphosphate: step 4/9.</text>
</comment>
<comment type="subcellular location">
    <subcellularLocation>
        <location evidence="1">Cytoplasm</location>
    </subcellularLocation>
</comment>
<comment type="similarity">
    <text evidence="1">Belongs to the HisA/HisF family.</text>
</comment>
<organism>
    <name type="scientific">Burkholderia mallei (strain NCTC 10247)</name>
    <dbReference type="NCBI Taxonomy" id="320389"/>
    <lineage>
        <taxon>Bacteria</taxon>
        <taxon>Pseudomonadati</taxon>
        <taxon>Pseudomonadota</taxon>
        <taxon>Betaproteobacteria</taxon>
        <taxon>Burkholderiales</taxon>
        <taxon>Burkholderiaceae</taxon>
        <taxon>Burkholderia</taxon>
        <taxon>pseudomallei group</taxon>
    </lineage>
</organism>
<accession>A3MPU5</accession>
<gene>
    <name evidence="1" type="primary">hisA</name>
    <name type="ordered locus">BMA10247_2760</name>
</gene>
<proteinExistence type="inferred from homology"/>
<protein>
    <recommendedName>
        <fullName evidence="1">1-(5-phosphoribosyl)-5-[(5-phosphoribosylamino)methylideneamino] imidazole-4-carboxamide isomerase</fullName>
        <ecNumber evidence="1">5.3.1.16</ecNumber>
    </recommendedName>
    <alternativeName>
        <fullName evidence="1">Phosphoribosylformimino-5-aminoimidazole carboxamide ribotide isomerase</fullName>
    </alternativeName>
</protein>
<dbReference type="EC" id="5.3.1.16" evidence="1"/>
<dbReference type="EMBL" id="CP000548">
    <property type="protein sequence ID" value="ABO06433.1"/>
    <property type="molecule type" value="Genomic_DNA"/>
</dbReference>
<dbReference type="RefSeq" id="WP_004199906.1">
    <property type="nucleotide sequence ID" value="NZ_CP007802.1"/>
</dbReference>
<dbReference type="SMR" id="A3MPU5"/>
<dbReference type="GeneID" id="93061751"/>
<dbReference type="KEGG" id="bmaz:BM44_572"/>
<dbReference type="KEGG" id="bmn:BMA10247_2760"/>
<dbReference type="PATRIC" id="fig|320389.8.peg.626"/>
<dbReference type="UniPathway" id="UPA00031">
    <property type="reaction ID" value="UER00009"/>
</dbReference>
<dbReference type="GO" id="GO:0005737">
    <property type="term" value="C:cytoplasm"/>
    <property type="evidence" value="ECO:0007669"/>
    <property type="project" value="UniProtKB-SubCell"/>
</dbReference>
<dbReference type="GO" id="GO:0003949">
    <property type="term" value="F:1-(5-phosphoribosyl)-5-[(5-phosphoribosylamino)methylideneamino]imidazole-4-carboxamide isomerase activity"/>
    <property type="evidence" value="ECO:0007669"/>
    <property type="project" value="UniProtKB-UniRule"/>
</dbReference>
<dbReference type="GO" id="GO:0000105">
    <property type="term" value="P:L-histidine biosynthetic process"/>
    <property type="evidence" value="ECO:0007669"/>
    <property type="project" value="UniProtKB-UniRule"/>
</dbReference>
<dbReference type="GO" id="GO:0000162">
    <property type="term" value="P:L-tryptophan biosynthetic process"/>
    <property type="evidence" value="ECO:0007669"/>
    <property type="project" value="TreeGrafter"/>
</dbReference>
<dbReference type="CDD" id="cd04732">
    <property type="entry name" value="HisA"/>
    <property type="match status" value="1"/>
</dbReference>
<dbReference type="FunFam" id="3.20.20.70:FF:000009">
    <property type="entry name" value="1-(5-phosphoribosyl)-5-[(5-phosphoribosylamino)methylideneamino] imidazole-4-carboxamide isomerase"/>
    <property type="match status" value="1"/>
</dbReference>
<dbReference type="Gene3D" id="3.20.20.70">
    <property type="entry name" value="Aldolase class I"/>
    <property type="match status" value="1"/>
</dbReference>
<dbReference type="HAMAP" id="MF_01014">
    <property type="entry name" value="HisA"/>
    <property type="match status" value="1"/>
</dbReference>
<dbReference type="InterPro" id="IPR013785">
    <property type="entry name" value="Aldolase_TIM"/>
</dbReference>
<dbReference type="InterPro" id="IPR006062">
    <property type="entry name" value="His_biosynth"/>
</dbReference>
<dbReference type="InterPro" id="IPR006063">
    <property type="entry name" value="HisA_bact_arch"/>
</dbReference>
<dbReference type="InterPro" id="IPR044524">
    <property type="entry name" value="Isoase_HisA-like"/>
</dbReference>
<dbReference type="InterPro" id="IPR023016">
    <property type="entry name" value="Isoase_HisA-like_bact"/>
</dbReference>
<dbReference type="InterPro" id="IPR011060">
    <property type="entry name" value="RibuloseP-bd_barrel"/>
</dbReference>
<dbReference type="NCBIfam" id="TIGR00007">
    <property type="entry name" value="1-(5-phosphoribosyl)-5-[(5-phosphoribosylamino)methylideneamino]imidazole-4-carboxamide isomerase"/>
    <property type="match status" value="1"/>
</dbReference>
<dbReference type="NCBIfam" id="NF010112">
    <property type="entry name" value="PRK13585.1"/>
    <property type="match status" value="1"/>
</dbReference>
<dbReference type="PANTHER" id="PTHR43090">
    <property type="entry name" value="1-(5-PHOSPHORIBOSYL)-5-[(5-PHOSPHORIBOSYLAMINO)METHYLIDENEAMINO] IMIDAZOLE-4-CARBOXAMIDE ISOMERASE"/>
    <property type="match status" value="1"/>
</dbReference>
<dbReference type="PANTHER" id="PTHR43090:SF2">
    <property type="entry name" value="1-(5-PHOSPHORIBOSYL)-5-[(5-PHOSPHORIBOSYLAMINO)METHYLIDENEAMINO] IMIDAZOLE-4-CARBOXAMIDE ISOMERASE"/>
    <property type="match status" value="1"/>
</dbReference>
<dbReference type="Pfam" id="PF00977">
    <property type="entry name" value="His_biosynth"/>
    <property type="match status" value="1"/>
</dbReference>
<dbReference type="SUPFAM" id="SSF51366">
    <property type="entry name" value="Ribulose-phoshate binding barrel"/>
    <property type="match status" value="1"/>
</dbReference>
<sequence>MLLIPAIDLKDGQCVRLKQGDMDQATIFSEDPAAMARKWVDLGARRLHLVDLNGAFAGKPKNLEAIEAILGEVGDEIPVQLGGGIRSLETIEKYLDAGLSYVIIGTAAVKDPGFLQDACSAFAGNIIVGLDAKDGKVATDGWSKLTGHEVIDLARKFEDYGVESIVYTDIGRDGMLQGINIEATVKLAQAVGIPVIASGGLSNIVDIEKLCEVEDEGIEGVICGRAIYSGDLDFAAAQKRADELNGELDDA</sequence>
<reference key="1">
    <citation type="journal article" date="2010" name="Genome Biol. Evol.">
        <title>Continuing evolution of Burkholderia mallei through genome reduction and large-scale rearrangements.</title>
        <authorList>
            <person name="Losada L."/>
            <person name="Ronning C.M."/>
            <person name="DeShazer D."/>
            <person name="Woods D."/>
            <person name="Fedorova N."/>
            <person name="Kim H.S."/>
            <person name="Shabalina S.A."/>
            <person name="Pearson T.R."/>
            <person name="Brinkac L."/>
            <person name="Tan P."/>
            <person name="Nandi T."/>
            <person name="Crabtree J."/>
            <person name="Badger J."/>
            <person name="Beckstrom-Sternberg S."/>
            <person name="Saqib M."/>
            <person name="Schutzer S.E."/>
            <person name="Keim P."/>
            <person name="Nierman W.C."/>
        </authorList>
    </citation>
    <scope>NUCLEOTIDE SEQUENCE [LARGE SCALE GENOMIC DNA]</scope>
    <source>
        <strain>NCTC 10247</strain>
    </source>
</reference>
<name>HIS4_BURM7</name>